<evidence type="ECO:0000255" key="1">
    <source>
        <dbReference type="HAMAP-Rule" id="MF_01515"/>
    </source>
</evidence>
<reference key="1">
    <citation type="submission" date="2007-06" db="EMBL/GenBank/DDBJ databases">
        <authorList>
            <person name="Brinkac L.M."/>
            <person name="Daugherty S."/>
            <person name="Dodson R.J."/>
            <person name="Madupu R."/>
            <person name="Brown J.L."/>
            <person name="Bruce D."/>
            <person name="Detter C."/>
            <person name="Munk C."/>
            <person name="Smith L.A."/>
            <person name="Smith T.J."/>
            <person name="White O."/>
            <person name="Brettin T.S."/>
        </authorList>
    </citation>
    <scope>NUCLEOTIDE SEQUENCE [LARGE SCALE GENOMIC DNA]</scope>
    <source>
        <strain>Langeland / NCTC 10281 / Type F</strain>
    </source>
</reference>
<feature type="chain" id="PRO_0000315258" description="UPF0316 protein CLI_0673">
    <location>
        <begin position="1"/>
        <end position="170"/>
    </location>
</feature>
<feature type="transmembrane region" description="Helical" evidence="1">
    <location>
        <begin position="1"/>
        <end position="21"/>
    </location>
</feature>
<feature type="transmembrane region" description="Helical" evidence="1">
    <location>
        <begin position="36"/>
        <end position="56"/>
    </location>
</feature>
<keyword id="KW-1003">Cell membrane</keyword>
<keyword id="KW-0472">Membrane</keyword>
<keyword id="KW-0812">Transmembrane</keyword>
<keyword id="KW-1133">Transmembrane helix</keyword>
<organism>
    <name type="scientific">Clostridium botulinum (strain Langeland / NCTC 10281 / Type F)</name>
    <dbReference type="NCBI Taxonomy" id="441772"/>
    <lineage>
        <taxon>Bacteria</taxon>
        <taxon>Bacillati</taxon>
        <taxon>Bacillota</taxon>
        <taxon>Clostridia</taxon>
        <taxon>Eubacteriales</taxon>
        <taxon>Clostridiaceae</taxon>
        <taxon>Clostridium</taxon>
    </lineage>
</organism>
<gene>
    <name type="ordered locus">CLI_0673</name>
</gene>
<comment type="subcellular location">
    <subcellularLocation>
        <location evidence="1">Cell membrane</location>
        <topology evidence="1">Multi-pass membrane protein</topology>
    </subcellularLocation>
</comment>
<comment type="similarity">
    <text evidence="1">Belongs to the UPF0316 family.</text>
</comment>
<sequence>MLSYYAFIFFAKIMEVALMTIRTVLITRGEKLYGSIIGFIEVTIWLYVTSSVLSGIKDDPIRMVVYALGFTCGNYMGCVIEEKLAIGLLTINVITSESDGKRLAEILRDENVGVTMVDAEGKIEQKKMLIIHAKRKRREEIIRTIEGSDINAMISVNDIKTVYGGYGIRK</sequence>
<dbReference type="EMBL" id="CP000728">
    <property type="protein sequence ID" value="ABS41651.1"/>
    <property type="molecule type" value="Genomic_DNA"/>
</dbReference>
<dbReference type="RefSeq" id="WP_003357138.1">
    <property type="nucleotide sequence ID" value="NC_009699.1"/>
</dbReference>
<dbReference type="SMR" id="A7GAZ7"/>
<dbReference type="KEGG" id="cbf:CLI_0673"/>
<dbReference type="HOGENOM" id="CLU_106166_0_0_9"/>
<dbReference type="Proteomes" id="UP000002410">
    <property type="component" value="Chromosome"/>
</dbReference>
<dbReference type="GO" id="GO:0005886">
    <property type="term" value="C:plasma membrane"/>
    <property type="evidence" value="ECO:0007669"/>
    <property type="project" value="UniProtKB-SubCell"/>
</dbReference>
<dbReference type="CDD" id="cd16381">
    <property type="entry name" value="YitT_C_like_1"/>
    <property type="match status" value="1"/>
</dbReference>
<dbReference type="HAMAP" id="MF_01515">
    <property type="entry name" value="UPF0316"/>
    <property type="match status" value="1"/>
</dbReference>
<dbReference type="InterPro" id="IPR019264">
    <property type="entry name" value="DUF2179"/>
</dbReference>
<dbReference type="InterPro" id="IPR044035">
    <property type="entry name" value="DUF5698"/>
</dbReference>
<dbReference type="InterPro" id="IPR022930">
    <property type="entry name" value="UPF0316"/>
</dbReference>
<dbReference type="PANTHER" id="PTHR40060">
    <property type="entry name" value="UPF0316 PROTEIN YEBE"/>
    <property type="match status" value="1"/>
</dbReference>
<dbReference type="PANTHER" id="PTHR40060:SF1">
    <property type="entry name" value="UPF0316 PROTEIN YEBE"/>
    <property type="match status" value="1"/>
</dbReference>
<dbReference type="Pfam" id="PF10035">
    <property type="entry name" value="DUF2179"/>
    <property type="match status" value="1"/>
</dbReference>
<dbReference type="Pfam" id="PF18955">
    <property type="entry name" value="DUF5698"/>
    <property type="match status" value="1"/>
</dbReference>
<proteinExistence type="inferred from homology"/>
<protein>
    <recommendedName>
        <fullName evidence="1">UPF0316 protein CLI_0673</fullName>
    </recommendedName>
</protein>
<accession>A7GAZ7</accession>
<name>Y673_CLOBL</name>